<evidence type="ECO:0000255" key="1">
    <source>
        <dbReference type="HAMAP-Rule" id="MF_01274"/>
    </source>
</evidence>
<reference key="1">
    <citation type="journal article" date="2007" name="PLoS ONE">
        <title>Analysis of the neurotoxin complex genes in Clostridium botulinum A1-A4 and B1 strains: BoNT/A3, /Ba4 and /B1 clusters are located within plasmids.</title>
        <authorList>
            <person name="Smith T.J."/>
            <person name="Hill K.K."/>
            <person name="Foley B.T."/>
            <person name="Detter J.C."/>
            <person name="Munk A.C."/>
            <person name="Bruce D.C."/>
            <person name="Doggett N.A."/>
            <person name="Smith L.A."/>
            <person name="Marks J.D."/>
            <person name="Xie G."/>
            <person name="Brettin T.S."/>
        </authorList>
    </citation>
    <scope>NUCLEOTIDE SEQUENCE [LARGE SCALE GENOMIC DNA]</scope>
    <source>
        <strain>Loch Maree / Type A3</strain>
    </source>
</reference>
<accession>B1KTC5</accession>
<dbReference type="EC" id="2.7.1.33" evidence="1"/>
<dbReference type="EMBL" id="CP000962">
    <property type="protein sequence ID" value="ACA53616.1"/>
    <property type="molecule type" value="Genomic_DNA"/>
</dbReference>
<dbReference type="RefSeq" id="WP_012341820.1">
    <property type="nucleotide sequence ID" value="NC_010520.1"/>
</dbReference>
<dbReference type="SMR" id="B1KTC5"/>
<dbReference type="KEGG" id="cbl:CLK_2987"/>
<dbReference type="HOGENOM" id="CLU_066627_1_0_9"/>
<dbReference type="UniPathway" id="UPA00241">
    <property type="reaction ID" value="UER00352"/>
</dbReference>
<dbReference type="GO" id="GO:0005737">
    <property type="term" value="C:cytoplasm"/>
    <property type="evidence" value="ECO:0007669"/>
    <property type="project" value="UniProtKB-SubCell"/>
</dbReference>
<dbReference type="GO" id="GO:0005524">
    <property type="term" value="F:ATP binding"/>
    <property type="evidence" value="ECO:0007669"/>
    <property type="project" value="UniProtKB-UniRule"/>
</dbReference>
<dbReference type="GO" id="GO:0046872">
    <property type="term" value="F:metal ion binding"/>
    <property type="evidence" value="ECO:0007669"/>
    <property type="project" value="UniProtKB-KW"/>
</dbReference>
<dbReference type="GO" id="GO:0004594">
    <property type="term" value="F:pantothenate kinase activity"/>
    <property type="evidence" value="ECO:0007669"/>
    <property type="project" value="UniProtKB-UniRule"/>
</dbReference>
<dbReference type="GO" id="GO:0015937">
    <property type="term" value="P:coenzyme A biosynthetic process"/>
    <property type="evidence" value="ECO:0007669"/>
    <property type="project" value="UniProtKB-UniRule"/>
</dbReference>
<dbReference type="CDD" id="cd24015">
    <property type="entry name" value="ASKHA_NBD_PanK-III"/>
    <property type="match status" value="1"/>
</dbReference>
<dbReference type="Gene3D" id="3.30.420.40">
    <property type="match status" value="2"/>
</dbReference>
<dbReference type="HAMAP" id="MF_01274">
    <property type="entry name" value="Pantothen_kinase_3"/>
    <property type="match status" value="1"/>
</dbReference>
<dbReference type="InterPro" id="IPR043129">
    <property type="entry name" value="ATPase_NBD"/>
</dbReference>
<dbReference type="InterPro" id="IPR004619">
    <property type="entry name" value="Type_III_PanK"/>
</dbReference>
<dbReference type="NCBIfam" id="TIGR00671">
    <property type="entry name" value="baf"/>
    <property type="match status" value="1"/>
</dbReference>
<dbReference type="NCBIfam" id="NF009847">
    <property type="entry name" value="PRK13318.1-5"/>
    <property type="match status" value="1"/>
</dbReference>
<dbReference type="NCBIfam" id="NF009848">
    <property type="entry name" value="PRK13318.1-6"/>
    <property type="match status" value="1"/>
</dbReference>
<dbReference type="NCBIfam" id="NF009855">
    <property type="entry name" value="PRK13321.1"/>
    <property type="match status" value="1"/>
</dbReference>
<dbReference type="PANTHER" id="PTHR34265">
    <property type="entry name" value="TYPE III PANTOTHENATE KINASE"/>
    <property type="match status" value="1"/>
</dbReference>
<dbReference type="PANTHER" id="PTHR34265:SF1">
    <property type="entry name" value="TYPE III PANTOTHENATE KINASE"/>
    <property type="match status" value="1"/>
</dbReference>
<dbReference type="Pfam" id="PF03309">
    <property type="entry name" value="Pan_kinase"/>
    <property type="match status" value="1"/>
</dbReference>
<dbReference type="SUPFAM" id="SSF53067">
    <property type="entry name" value="Actin-like ATPase domain"/>
    <property type="match status" value="2"/>
</dbReference>
<name>COAX_CLOBM</name>
<sequence length="258" mass="28291">MILVLDVGNTNIVLGIYKNKELIANWRLATDNKRTADEYGIQVIELFSHNNLSFSDIEGVIISSVVPNIMYSLEHMISKYFNIKPIIVGPGVKTGINIKYDNPKEVGADRIVNAVAAHEIYKKPLIIIDFGTATTFCAVTKEANYLGGTICPGIKISSDALFDKAAKLPRVELVKTPGVICKNTVASIQSGIIYGYAGQVDYIVSKMKKEMIDLGEEEPFVVATGGFAKLISEESKSIDEINAILTLEGLRVIYEKNK</sequence>
<comment type="function">
    <text evidence="1">Catalyzes the phosphorylation of pantothenate (Pan), the first step in CoA biosynthesis.</text>
</comment>
<comment type="catalytic activity">
    <reaction evidence="1">
        <text>(R)-pantothenate + ATP = (R)-4'-phosphopantothenate + ADP + H(+)</text>
        <dbReference type="Rhea" id="RHEA:16373"/>
        <dbReference type="ChEBI" id="CHEBI:10986"/>
        <dbReference type="ChEBI" id="CHEBI:15378"/>
        <dbReference type="ChEBI" id="CHEBI:29032"/>
        <dbReference type="ChEBI" id="CHEBI:30616"/>
        <dbReference type="ChEBI" id="CHEBI:456216"/>
        <dbReference type="EC" id="2.7.1.33"/>
    </reaction>
</comment>
<comment type="cofactor">
    <cofactor evidence="1">
        <name>NH4(+)</name>
        <dbReference type="ChEBI" id="CHEBI:28938"/>
    </cofactor>
    <cofactor evidence="1">
        <name>K(+)</name>
        <dbReference type="ChEBI" id="CHEBI:29103"/>
    </cofactor>
    <text evidence="1">A monovalent cation. Ammonium or potassium.</text>
</comment>
<comment type="pathway">
    <text evidence="1">Cofactor biosynthesis; coenzyme A biosynthesis; CoA from (R)-pantothenate: step 1/5.</text>
</comment>
<comment type="subunit">
    <text evidence="1">Homodimer.</text>
</comment>
<comment type="subcellular location">
    <subcellularLocation>
        <location evidence="1">Cytoplasm</location>
    </subcellularLocation>
</comment>
<comment type="similarity">
    <text evidence="1">Belongs to the type III pantothenate kinase family.</text>
</comment>
<feature type="chain" id="PRO_1000140236" description="Type III pantothenate kinase">
    <location>
        <begin position="1"/>
        <end position="258"/>
    </location>
</feature>
<feature type="active site" description="Proton acceptor" evidence="1">
    <location>
        <position position="109"/>
    </location>
</feature>
<feature type="binding site" evidence="1">
    <location>
        <begin position="6"/>
        <end position="13"/>
    </location>
    <ligand>
        <name>ATP</name>
        <dbReference type="ChEBI" id="CHEBI:30616"/>
    </ligand>
</feature>
<feature type="binding site" evidence="1">
    <location>
        <position position="100"/>
    </location>
    <ligand>
        <name>substrate</name>
    </ligand>
</feature>
<feature type="binding site" evidence="1">
    <location>
        <begin position="107"/>
        <end position="110"/>
    </location>
    <ligand>
        <name>substrate</name>
    </ligand>
</feature>
<feature type="binding site" evidence="1">
    <location>
        <position position="129"/>
    </location>
    <ligand>
        <name>K(+)</name>
        <dbReference type="ChEBI" id="CHEBI:29103"/>
    </ligand>
</feature>
<feature type="binding site" evidence="1">
    <location>
        <position position="132"/>
    </location>
    <ligand>
        <name>ATP</name>
        <dbReference type="ChEBI" id="CHEBI:30616"/>
    </ligand>
</feature>
<feature type="binding site" evidence="1">
    <location>
        <position position="184"/>
    </location>
    <ligand>
        <name>substrate</name>
    </ligand>
</feature>
<organism>
    <name type="scientific">Clostridium botulinum (strain Loch Maree / Type A3)</name>
    <dbReference type="NCBI Taxonomy" id="498214"/>
    <lineage>
        <taxon>Bacteria</taxon>
        <taxon>Bacillati</taxon>
        <taxon>Bacillota</taxon>
        <taxon>Clostridia</taxon>
        <taxon>Eubacteriales</taxon>
        <taxon>Clostridiaceae</taxon>
        <taxon>Clostridium</taxon>
    </lineage>
</organism>
<gene>
    <name evidence="1" type="primary">coaX</name>
    <name type="ordered locus">CLK_2987</name>
</gene>
<keyword id="KW-0067">ATP-binding</keyword>
<keyword id="KW-0173">Coenzyme A biosynthesis</keyword>
<keyword id="KW-0963">Cytoplasm</keyword>
<keyword id="KW-0418">Kinase</keyword>
<keyword id="KW-0479">Metal-binding</keyword>
<keyword id="KW-0547">Nucleotide-binding</keyword>
<keyword id="KW-0630">Potassium</keyword>
<keyword id="KW-0808">Transferase</keyword>
<protein>
    <recommendedName>
        <fullName evidence="1">Type III pantothenate kinase</fullName>
        <ecNumber evidence="1">2.7.1.33</ecNumber>
    </recommendedName>
    <alternativeName>
        <fullName evidence="1">PanK-III</fullName>
    </alternativeName>
    <alternativeName>
        <fullName evidence="1">Pantothenic acid kinase</fullName>
    </alternativeName>
</protein>
<proteinExistence type="inferred from homology"/>